<gene>
    <name evidence="1" type="primary">mntH</name>
    <name type="ordered locus">YPTB2705</name>
</gene>
<dbReference type="EMBL" id="BX936398">
    <property type="protein sequence ID" value="CAH21943.1"/>
    <property type="molecule type" value="Genomic_DNA"/>
</dbReference>
<dbReference type="RefSeq" id="WP_002211621.1">
    <property type="nucleotide sequence ID" value="NZ_CP009712.1"/>
</dbReference>
<dbReference type="SMR" id="Q668N2"/>
<dbReference type="KEGG" id="ypo:BZ17_3932"/>
<dbReference type="KEGG" id="yps:YPTB2705"/>
<dbReference type="PATRIC" id="fig|273123.14.peg.4126"/>
<dbReference type="Proteomes" id="UP000001011">
    <property type="component" value="Chromosome"/>
</dbReference>
<dbReference type="GO" id="GO:0005886">
    <property type="term" value="C:plasma membrane"/>
    <property type="evidence" value="ECO:0007669"/>
    <property type="project" value="UniProtKB-SubCell"/>
</dbReference>
<dbReference type="GO" id="GO:0015086">
    <property type="term" value="F:cadmium ion transmembrane transporter activity"/>
    <property type="evidence" value="ECO:0007669"/>
    <property type="project" value="TreeGrafter"/>
</dbReference>
<dbReference type="GO" id="GO:0005384">
    <property type="term" value="F:manganese ion transmembrane transporter activity"/>
    <property type="evidence" value="ECO:0007669"/>
    <property type="project" value="TreeGrafter"/>
</dbReference>
<dbReference type="GO" id="GO:0046872">
    <property type="term" value="F:metal ion binding"/>
    <property type="evidence" value="ECO:0007669"/>
    <property type="project" value="UniProtKB-UniRule"/>
</dbReference>
<dbReference type="GO" id="GO:0015293">
    <property type="term" value="F:symporter activity"/>
    <property type="evidence" value="ECO:0007669"/>
    <property type="project" value="UniProtKB-UniRule"/>
</dbReference>
<dbReference type="GO" id="GO:0034755">
    <property type="term" value="P:iron ion transmembrane transport"/>
    <property type="evidence" value="ECO:0007669"/>
    <property type="project" value="TreeGrafter"/>
</dbReference>
<dbReference type="HAMAP" id="MF_00221">
    <property type="entry name" value="NRAMP"/>
    <property type="match status" value="1"/>
</dbReference>
<dbReference type="InterPro" id="IPR001046">
    <property type="entry name" value="NRAMP_fam"/>
</dbReference>
<dbReference type="NCBIfam" id="TIGR01197">
    <property type="entry name" value="nramp"/>
    <property type="match status" value="1"/>
</dbReference>
<dbReference type="NCBIfam" id="NF037982">
    <property type="entry name" value="Nramp_1"/>
    <property type="match status" value="1"/>
</dbReference>
<dbReference type="NCBIfam" id="NF001923">
    <property type="entry name" value="PRK00701.1"/>
    <property type="match status" value="1"/>
</dbReference>
<dbReference type="PANTHER" id="PTHR11706:SF33">
    <property type="entry name" value="NATURAL RESISTANCE-ASSOCIATED MACROPHAGE PROTEIN 2"/>
    <property type="match status" value="1"/>
</dbReference>
<dbReference type="PANTHER" id="PTHR11706">
    <property type="entry name" value="SOLUTE CARRIER PROTEIN FAMILY 11 MEMBER"/>
    <property type="match status" value="1"/>
</dbReference>
<dbReference type="Pfam" id="PF01566">
    <property type="entry name" value="Nramp"/>
    <property type="match status" value="1"/>
</dbReference>
<dbReference type="PRINTS" id="PR00447">
    <property type="entry name" value="NATRESASSCMP"/>
</dbReference>
<proteinExistence type="inferred from homology"/>
<reference key="1">
    <citation type="journal article" date="2004" name="Proc. Natl. Acad. Sci. U.S.A.">
        <title>Insights into the evolution of Yersinia pestis through whole-genome comparison with Yersinia pseudotuberculosis.</title>
        <authorList>
            <person name="Chain P.S.G."/>
            <person name="Carniel E."/>
            <person name="Larimer F.W."/>
            <person name="Lamerdin J."/>
            <person name="Stoutland P.O."/>
            <person name="Regala W.M."/>
            <person name="Georgescu A.M."/>
            <person name="Vergez L.M."/>
            <person name="Land M.L."/>
            <person name="Motin V.L."/>
            <person name="Brubaker R.R."/>
            <person name="Fowler J."/>
            <person name="Hinnebusch J."/>
            <person name="Marceau M."/>
            <person name="Medigue C."/>
            <person name="Simonet M."/>
            <person name="Chenal-Francisque V."/>
            <person name="Souza B."/>
            <person name="Dacheux D."/>
            <person name="Elliott J.M."/>
            <person name="Derbise A."/>
            <person name="Hauser L.J."/>
            <person name="Garcia E."/>
        </authorList>
    </citation>
    <scope>NUCLEOTIDE SEQUENCE [LARGE SCALE GENOMIC DNA]</scope>
    <source>
        <strain>IP32953</strain>
    </source>
</reference>
<keyword id="KW-0997">Cell inner membrane</keyword>
<keyword id="KW-1003">Cell membrane</keyword>
<keyword id="KW-0406">Ion transport</keyword>
<keyword id="KW-0472">Membrane</keyword>
<keyword id="KW-0769">Symport</keyword>
<keyword id="KW-0812">Transmembrane</keyword>
<keyword id="KW-1133">Transmembrane helix</keyword>
<keyword id="KW-0813">Transport</keyword>
<sequence length="409" mass="43742">MLNGRAVDTSRRPLRKIKLSLMGPAFIAAIAYIDPGNFATNIQAGATFGYTLLWVVVWANVMAMLVQLLSAKLGIATGKNLAEHIRDRFPRPVVWAYWVQAEIIVMATDLAEFIGAAIGFKLLFGVTLLQGAVLTGIATFLILMLQNRGQKPLELVIGGLLLFVAAAYIVELIFSQPDIAALGRGMLIPNLPDGNAVFLAAGVLGATIMPHVIYLHSALTQTGGEESKTERYASTKFDVAIAMTIAGFVNLAMMATAAAAFHFNGYENIAEIEEAYITLQPLLGNAAATVFGLSLIAAGLSSTVVGTLAGQVVMQGFVRFYIPMWVRRIVTMLPSFIVILAGMDATQILVMSQVLLSFGIALALVPLLVFTGNKELMGELVDTKTTQILGKLVVLIVVGLNAYLLISLL</sequence>
<name>MNTH_YERPS</name>
<protein>
    <recommendedName>
        <fullName evidence="1">Divalent metal cation transporter MntH</fullName>
    </recommendedName>
</protein>
<accession>Q668N2</accession>
<organism>
    <name type="scientific">Yersinia pseudotuberculosis serotype I (strain IP32953)</name>
    <dbReference type="NCBI Taxonomy" id="273123"/>
    <lineage>
        <taxon>Bacteria</taxon>
        <taxon>Pseudomonadati</taxon>
        <taxon>Pseudomonadota</taxon>
        <taxon>Gammaproteobacteria</taxon>
        <taxon>Enterobacterales</taxon>
        <taxon>Yersiniaceae</taxon>
        <taxon>Yersinia</taxon>
    </lineage>
</organism>
<feature type="chain" id="PRO_1000024120" description="Divalent metal cation transporter MntH">
    <location>
        <begin position="1"/>
        <end position="409"/>
    </location>
</feature>
<feature type="transmembrane region" description="Helical" evidence="1">
    <location>
        <begin position="19"/>
        <end position="39"/>
    </location>
</feature>
<feature type="transmembrane region" description="Helical" evidence="1">
    <location>
        <begin position="46"/>
        <end position="66"/>
    </location>
</feature>
<feature type="transmembrane region" description="Helical" evidence="1">
    <location>
        <begin position="98"/>
        <end position="118"/>
    </location>
</feature>
<feature type="transmembrane region" description="Helical" evidence="1">
    <location>
        <begin position="122"/>
        <end position="142"/>
    </location>
</feature>
<feature type="transmembrane region" description="Helical" evidence="1">
    <location>
        <begin position="155"/>
        <end position="175"/>
    </location>
</feature>
<feature type="transmembrane region" description="Helical" evidence="1">
    <location>
        <begin position="196"/>
        <end position="216"/>
    </location>
</feature>
<feature type="transmembrane region" description="Helical" evidence="1">
    <location>
        <begin position="241"/>
        <end position="261"/>
    </location>
</feature>
<feature type="transmembrane region" description="Helical" evidence="1">
    <location>
        <begin position="290"/>
        <end position="310"/>
    </location>
</feature>
<feature type="transmembrane region" description="Helical" evidence="1">
    <location>
        <begin position="320"/>
        <end position="340"/>
    </location>
</feature>
<feature type="transmembrane region" description="Helical" evidence="1">
    <location>
        <begin position="348"/>
        <end position="368"/>
    </location>
</feature>
<feature type="transmembrane region" description="Helical" evidence="1">
    <location>
        <begin position="388"/>
        <end position="408"/>
    </location>
</feature>
<comment type="function">
    <text evidence="1">H(+)-stimulated, divalent metal cation uptake system.</text>
</comment>
<comment type="subcellular location">
    <subcellularLocation>
        <location evidence="1">Cell inner membrane</location>
        <topology evidence="1">Multi-pass membrane protein</topology>
    </subcellularLocation>
</comment>
<comment type="similarity">
    <text evidence="1">Belongs to the NRAMP family.</text>
</comment>
<evidence type="ECO:0000255" key="1">
    <source>
        <dbReference type="HAMAP-Rule" id="MF_00221"/>
    </source>
</evidence>